<accession>Q31U09</accession>
<feature type="chain" id="PRO_0000225577" description="DNA-directed RNA polymerase subunit beta'">
    <location>
        <begin position="1"/>
        <end position="1407"/>
    </location>
</feature>
<feature type="binding site" evidence="1">
    <location>
        <position position="70"/>
    </location>
    <ligand>
        <name>Zn(2+)</name>
        <dbReference type="ChEBI" id="CHEBI:29105"/>
        <label>1</label>
    </ligand>
</feature>
<feature type="binding site" evidence="1">
    <location>
        <position position="72"/>
    </location>
    <ligand>
        <name>Zn(2+)</name>
        <dbReference type="ChEBI" id="CHEBI:29105"/>
        <label>1</label>
    </ligand>
</feature>
<feature type="binding site" evidence="1">
    <location>
        <position position="85"/>
    </location>
    <ligand>
        <name>Zn(2+)</name>
        <dbReference type="ChEBI" id="CHEBI:29105"/>
        <label>1</label>
    </ligand>
</feature>
<feature type="binding site" evidence="1">
    <location>
        <position position="88"/>
    </location>
    <ligand>
        <name>Zn(2+)</name>
        <dbReference type="ChEBI" id="CHEBI:29105"/>
        <label>1</label>
    </ligand>
</feature>
<feature type="binding site" evidence="1">
    <location>
        <position position="460"/>
    </location>
    <ligand>
        <name>Mg(2+)</name>
        <dbReference type="ChEBI" id="CHEBI:18420"/>
    </ligand>
</feature>
<feature type="binding site" evidence="1">
    <location>
        <position position="462"/>
    </location>
    <ligand>
        <name>Mg(2+)</name>
        <dbReference type="ChEBI" id="CHEBI:18420"/>
    </ligand>
</feature>
<feature type="binding site" evidence="1">
    <location>
        <position position="464"/>
    </location>
    <ligand>
        <name>Mg(2+)</name>
        <dbReference type="ChEBI" id="CHEBI:18420"/>
    </ligand>
</feature>
<feature type="binding site" evidence="1">
    <location>
        <position position="814"/>
    </location>
    <ligand>
        <name>Zn(2+)</name>
        <dbReference type="ChEBI" id="CHEBI:29105"/>
        <label>2</label>
    </ligand>
</feature>
<feature type="binding site" evidence="1">
    <location>
        <position position="888"/>
    </location>
    <ligand>
        <name>Zn(2+)</name>
        <dbReference type="ChEBI" id="CHEBI:29105"/>
        <label>2</label>
    </ligand>
</feature>
<feature type="binding site" evidence="1">
    <location>
        <position position="895"/>
    </location>
    <ligand>
        <name>Zn(2+)</name>
        <dbReference type="ChEBI" id="CHEBI:29105"/>
        <label>2</label>
    </ligand>
</feature>
<feature type="binding site" evidence="1">
    <location>
        <position position="898"/>
    </location>
    <ligand>
        <name>Zn(2+)</name>
        <dbReference type="ChEBI" id="CHEBI:29105"/>
        <label>2</label>
    </ligand>
</feature>
<feature type="modified residue" description="N6-acetyllysine" evidence="1">
    <location>
        <position position="972"/>
    </location>
</feature>
<dbReference type="EC" id="2.7.7.6" evidence="1"/>
<dbReference type="EMBL" id="CP000036">
    <property type="protein sequence ID" value="ABB68449.1"/>
    <property type="molecule type" value="Genomic_DNA"/>
</dbReference>
<dbReference type="RefSeq" id="WP_000653944.1">
    <property type="nucleotide sequence ID" value="NC_007613.1"/>
</dbReference>
<dbReference type="SMR" id="Q31U09"/>
<dbReference type="GeneID" id="93777906"/>
<dbReference type="KEGG" id="sbo:SBO_4008"/>
<dbReference type="HOGENOM" id="CLU_000524_3_1_6"/>
<dbReference type="Proteomes" id="UP000007067">
    <property type="component" value="Chromosome"/>
</dbReference>
<dbReference type="GO" id="GO:0000428">
    <property type="term" value="C:DNA-directed RNA polymerase complex"/>
    <property type="evidence" value="ECO:0007669"/>
    <property type="project" value="UniProtKB-KW"/>
</dbReference>
<dbReference type="GO" id="GO:0003677">
    <property type="term" value="F:DNA binding"/>
    <property type="evidence" value="ECO:0007669"/>
    <property type="project" value="UniProtKB-UniRule"/>
</dbReference>
<dbReference type="GO" id="GO:0003899">
    <property type="term" value="F:DNA-directed RNA polymerase activity"/>
    <property type="evidence" value="ECO:0007669"/>
    <property type="project" value="UniProtKB-UniRule"/>
</dbReference>
<dbReference type="GO" id="GO:0000287">
    <property type="term" value="F:magnesium ion binding"/>
    <property type="evidence" value="ECO:0007669"/>
    <property type="project" value="UniProtKB-UniRule"/>
</dbReference>
<dbReference type="GO" id="GO:0008270">
    <property type="term" value="F:zinc ion binding"/>
    <property type="evidence" value="ECO:0007669"/>
    <property type="project" value="UniProtKB-UniRule"/>
</dbReference>
<dbReference type="GO" id="GO:0006351">
    <property type="term" value="P:DNA-templated transcription"/>
    <property type="evidence" value="ECO:0007669"/>
    <property type="project" value="UniProtKB-UniRule"/>
</dbReference>
<dbReference type="CDD" id="cd02655">
    <property type="entry name" value="RNAP_beta'_C"/>
    <property type="match status" value="1"/>
</dbReference>
<dbReference type="CDD" id="cd01609">
    <property type="entry name" value="RNAP_beta'_N"/>
    <property type="match status" value="1"/>
</dbReference>
<dbReference type="FunFam" id="1.10.132.30:FF:000003">
    <property type="entry name" value="DNA-directed RNA polymerase subunit beta"/>
    <property type="match status" value="1"/>
</dbReference>
<dbReference type="FunFam" id="1.10.150.390:FF:000002">
    <property type="entry name" value="DNA-directed RNA polymerase subunit beta"/>
    <property type="match status" value="1"/>
</dbReference>
<dbReference type="FunFam" id="1.10.274.100:FF:000002">
    <property type="entry name" value="DNA-directed RNA polymerase subunit beta"/>
    <property type="match status" value="1"/>
</dbReference>
<dbReference type="FunFam" id="1.10.40.90:FF:000001">
    <property type="entry name" value="DNA-directed RNA polymerase subunit beta"/>
    <property type="match status" value="1"/>
</dbReference>
<dbReference type="FunFam" id="2.40.50.100:FF:000012">
    <property type="entry name" value="DNA-directed RNA polymerase subunit beta"/>
    <property type="match status" value="1"/>
</dbReference>
<dbReference type="FunFam" id="2.40.50.100:FF:000016">
    <property type="entry name" value="DNA-directed RNA polymerase subunit beta"/>
    <property type="match status" value="1"/>
</dbReference>
<dbReference type="FunFam" id="2.40.50.100:FF:000019">
    <property type="entry name" value="DNA-directed RNA polymerase subunit beta"/>
    <property type="match status" value="1"/>
</dbReference>
<dbReference type="FunFam" id="4.10.860.120:FF:000001">
    <property type="entry name" value="DNA-directed RNA polymerase subunit beta"/>
    <property type="match status" value="1"/>
</dbReference>
<dbReference type="Gene3D" id="1.10.132.30">
    <property type="match status" value="1"/>
</dbReference>
<dbReference type="Gene3D" id="1.10.150.390">
    <property type="match status" value="1"/>
</dbReference>
<dbReference type="Gene3D" id="1.10.1790.20">
    <property type="match status" value="1"/>
</dbReference>
<dbReference type="Gene3D" id="1.10.40.90">
    <property type="match status" value="1"/>
</dbReference>
<dbReference type="Gene3D" id="2.40.40.20">
    <property type="match status" value="1"/>
</dbReference>
<dbReference type="Gene3D" id="2.40.50.100">
    <property type="match status" value="3"/>
</dbReference>
<dbReference type="Gene3D" id="4.10.860.120">
    <property type="entry name" value="RNA polymerase II, clamp domain"/>
    <property type="match status" value="1"/>
</dbReference>
<dbReference type="Gene3D" id="1.10.274.100">
    <property type="entry name" value="RNA polymerase Rpb1, domain 3"/>
    <property type="match status" value="1"/>
</dbReference>
<dbReference type="HAMAP" id="MF_01322">
    <property type="entry name" value="RNApol_bact_RpoC"/>
    <property type="match status" value="1"/>
</dbReference>
<dbReference type="InterPro" id="IPR045867">
    <property type="entry name" value="DNA-dir_RpoC_beta_prime"/>
</dbReference>
<dbReference type="InterPro" id="IPR012754">
    <property type="entry name" value="DNA-dir_RpoC_beta_prime_bact"/>
</dbReference>
<dbReference type="InterPro" id="IPR000722">
    <property type="entry name" value="RNA_pol_asu"/>
</dbReference>
<dbReference type="InterPro" id="IPR006592">
    <property type="entry name" value="RNA_pol_N"/>
</dbReference>
<dbReference type="InterPro" id="IPR007080">
    <property type="entry name" value="RNA_pol_Rpb1_1"/>
</dbReference>
<dbReference type="InterPro" id="IPR007066">
    <property type="entry name" value="RNA_pol_Rpb1_3"/>
</dbReference>
<dbReference type="InterPro" id="IPR042102">
    <property type="entry name" value="RNA_pol_Rpb1_3_sf"/>
</dbReference>
<dbReference type="InterPro" id="IPR007083">
    <property type="entry name" value="RNA_pol_Rpb1_4"/>
</dbReference>
<dbReference type="InterPro" id="IPR007081">
    <property type="entry name" value="RNA_pol_Rpb1_5"/>
</dbReference>
<dbReference type="InterPro" id="IPR044893">
    <property type="entry name" value="RNA_pol_Rpb1_clamp_domain"/>
</dbReference>
<dbReference type="InterPro" id="IPR038120">
    <property type="entry name" value="Rpb1_funnel_sf"/>
</dbReference>
<dbReference type="NCBIfam" id="TIGR02386">
    <property type="entry name" value="rpoC_TIGR"/>
    <property type="match status" value="1"/>
</dbReference>
<dbReference type="PANTHER" id="PTHR19376">
    <property type="entry name" value="DNA-DIRECTED RNA POLYMERASE"/>
    <property type="match status" value="1"/>
</dbReference>
<dbReference type="PANTHER" id="PTHR19376:SF54">
    <property type="entry name" value="DNA-DIRECTED RNA POLYMERASE SUBUNIT BETA"/>
    <property type="match status" value="1"/>
</dbReference>
<dbReference type="Pfam" id="PF04997">
    <property type="entry name" value="RNA_pol_Rpb1_1"/>
    <property type="match status" value="1"/>
</dbReference>
<dbReference type="Pfam" id="PF00623">
    <property type="entry name" value="RNA_pol_Rpb1_2"/>
    <property type="match status" value="2"/>
</dbReference>
<dbReference type="Pfam" id="PF04983">
    <property type="entry name" value="RNA_pol_Rpb1_3"/>
    <property type="match status" value="1"/>
</dbReference>
<dbReference type="Pfam" id="PF05000">
    <property type="entry name" value="RNA_pol_Rpb1_4"/>
    <property type="match status" value="1"/>
</dbReference>
<dbReference type="Pfam" id="PF04998">
    <property type="entry name" value="RNA_pol_Rpb1_5"/>
    <property type="match status" value="1"/>
</dbReference>
<dbReference type="SMART" id="SM00663">
    <property type="entry name" value="RPOLA_N"/>
    <property type="match status" value="1"/>
</dbReference>
<dbReference type="SUPFAM" id="SSF64484">
    <property type="entry name" value="beta and beta-prime subunits of DNA dependent RNA-polymerase"/>
    <property type="match status" value="1"/>
</dbReference>
<comment type="function">
    <text evidence="1">DNA-dependent RNA polymerase catalyzes the transcription of DNA into RNA using the four ribonucleoside triphosphates as substrates.</text>
</comment>
<comment type="catalytic activity">
    <reaction evidence="1">
        <text>RNA(n) + a ribonucleoside 5'-triphosphate = RNA(n+1) + diphosphate</text>
        <dbReference type="Rhea" id="RHEA:21248"/>
        <dbReference type="Rhea" id="RHEA-COMP:14527"/>
        <dbReference type="Rhea" id="RHEA-COMP:17342"/>
        <dbReference type="ChEBI" id="CHEBI:33019"/>
        <dbReference type="ChEBI" id="CHEBI:61557"/>
        <dbReference type="ChEBI" id="CHEBI:140395"/>
        <dbReference type="EC" id="2.7.7.6"/>
    </reaction>
</comment>
<comment type="cofactor">
    <cofactor evidence="1">
        <name>Mg(2+)</name>
        <dbReference type="ChEBI" id="CHEBI:18420"/>
    </cofactor>
    <text evidence="1">Binds 1 Mg(2+) ion per subunit.</text>
</comment>
<comment type="cofactor">
    <cofactor evidence="1">
        <name>Zn(2+)</name>
        <dbReference type="ChEBI" id="CHEBI:29105"/>
    </cofactor>
    <text evidence="1">Binds 2 Zn(2+) ions per subunit.</text>
</comment>
<comment type="subunit">
    <text evidence="1">The RNAP catalytic core consists of 2 alpha, 1 beta, 1 beta' and 1 omega subunit. When a sigma factor is associated with the core the holoenzyme is formed, which can initiate transcription.</text>
</comment>
<comment type="similarity">
    <text evidence="1">Belongs to the RNA polymerase beta' chain family.</text>
</comment>
<proteinExistence type="inferred from homology"/>
<name>RPOC_SHIBS</name>
<keyword id="KW-0007">Acetylation</keyword>
<keyword id="KW-0240">DNA-directed RNA polymerase</keyword>
<keyword id="KW-0460">Magnesium</keyword>
<keyword id="KW-0479">Metal-binding</keyword>
<keyword id="KW-0548">Nucleotidyltransferase</keyword>
<keyword id="KW-0804">Transcription</keyword>
<keyword id="KW-0808">Transferase</keyword>
<keyword id="KW-0862">Zinc</keyword>
<evidence type="ECO:0000255" key="1">
    <source>
        <dbReference type="HAMAP-Rule" id="MF_01322"/>
    </source>
</evidence>
<sequence length="1407" mass="155160">MKDLLKFLKAQTKTEEFDAIKIALASPDMIRSWSFGEVKKPETINYRTFKPERDGLFCARIFGPVKDYECLCGKYKRLKHRGVICEKCGVEVTQTKVRRERMGHIELASPTAHIWFLKSLPSRIGLLLDMPLRDIERVLYFESYVVIEGGMTNLERQQILTEEQYLDALEEFGDEFDAKMGAEAIQALLKSMDLEQECEQLREELNETNSETKRKKLTKRIKLLEAFVQSGNKPEWMILTVLPVLPPDLRPLVPLDGGRFATSDLNDLYRRVINRNNRLKRLLDLAAPDIIVRNEKRMLQEAVDALLDNGRRGRAITGSNKRPLKSLADMIKGKQGRFRQNLLGKRVDYSGRSVITVGPYLRLHQCGLPKKMALELFKPFIYGKLELRGLATTIKAAKKMVEREEAVVWDILDEVIREHPVLLNRAPTLHRLGIQAFEPVLIEGKAIQLHPLVCAAYNADFDGDQMAVHVPLTLEAQLEARALMMSTNNILSPANGEPIIVPSQDVVLGLYYMTRDCVNAKGEGMVLTGPKEAERLYRSGLASLHARVKVRITEYEKDANGELVAKTSLKDTTVGRAILWMIVPKGLPYSIVNQALGKKAISKMLNTCYRILGLKPTVIFADQIMYTGFAYAARSGASVGIDDMVIPEKKHEIISEAEAEVAEIQEQFQSGLVTAGERYNKVIDIWAAANDRVSKAMMDNLQTETVINRDGQEEKQVSFNSIYMMADSGARGSAAQIRQLAGMRGLMAKPDGSIIETPITANFREGLNVLQYFISTHGARKGLADTALKTANSGYLTRRLVDVAQDLVVTEDDCGTHEGIMMTPVIEGGDVKEPLRDRVLGRVTAEDVLKPGTADILVPRNTLLHEQWCDLLEENSVDAVKVRSVVSCDTDFGVCAHCYGRDLARGHIINKGEAIGVIAAQSIGEPGTQLTMRTFHIGGAASRAAAESSIQVKNKGSIKLSNVKSVVNSSGKLVITSRNTELKLIDEFGRTKESYKVPYGAVLAKGDGEQVAGGETVANWDPHTMPVITEVSGFVRFTDMIDGQTITRQTDELTGLSSLVVLDSAERTAGGKDLRPALKIVDAQGNDVLIPGTDMPAQYFLPGKAIVQLEDGVQISSGDTLARIPQESGGTKDITGGLPRVADLFEARRPKEPAILAEISGIVSFGKETKGKRRLVITPVDGSDPYEEMIPKWRQLNVFEGERVERGDVISDGPEAPHDILRLRGVHAVTRYIVNEVQDVYRLQGVKINDKHIEVIVRQMLRKATIVNAGSSDFLEGEQVEYSRVKIANRELEANGKVGATYSRDLLGITKASLATESFISAASFQETTRVLTEAAVAGKRDELRGLKENVIVGRLIPAGTGYAYHQDRMRRRAAGEAPAAPQVTAEDASASLAELLNAGLGGSDNE</sequence>
<organism>
    <name type="scientific">Shigella boydii serotype 4 (strain Sb227)</name>
    <dbReference type="NCBI Taxonomy" id="300268"/>
    <lineage>
        <taxon>Bacteria</taxon>
        <taxon>Pseudomonadati</taxon>
        <taxon>Pseudomonadota</taxon>
        <taxon>Gammaproteobacteria</taxon>
        <taxon>Enterobacterales</taxon>
        <taxon>Enterobacteriaceae</taxon>
        <taxon>Shigella</taxon>
    </lineage>
</organism>
<reference key="1">
    <citation type="journal article" date="2005" name="Nucleic Acids Res.">
        <title>Genome dynamics and diversity of Shigella species, the etiologic agents of bacillary dysentery.</title>
        <authorList>
            <person name="Yang F."/>
            <person name="Yang J."/>
            <person name="Zhang X."/>
            <person name="Chen L."/>
            <person name="Jiang Y."/>
            <person name="Yan Y."/>
            <person name="Tang X."/>
            <person name="Wang J."/>
            <person name="Xiong Z."/>
            <person name="Dong J."/>
            <person name="Xue Y."/>
            <person name="Zhu Y."/>
            <person name="Xu X."/>
            <person name="Sun L."/>
            <person name="Chen S."/>
            <person name="Nie H."/>
            <person name="Peng J."/>
            <person name="Xu J."/>
            <person name="Wang Y."/>
            <person name="Yuan Z."/>
            <person name="Wen Y."/>
            <person name="Yao Z."/>
            <person name="Shen Y."/>
            <person name="Qiang B."/>
            <person name="Hou Y."/>
            <person name="Yu J."/>
            <person name="Jin Q."/>
        </authorList>
    </citation>
    <scope>NUCLEOTIDE SEQUENCE [LARGE SCALE GENOMIC DNA]</scope>
    <source>
        <strain>Sb227</strain>
    </source>
</reference>
<protein>
    <recommendedName>
        <fullName evidence="1">DNA-directed RNA polymerase subunit beta'</fullName>
        <shortName evidence="1">RNAP subunit beta'</shortName>
        <ecNumber evidence="1">2.7.7.6</ecNumber>
    </recommendedName>
    <alternativeName>
        <fullName evidence="1">RNA polymerase subunit beta'</fullName>
    </alternativeName>
    <alternativeName>
        <fullName evidence="1">Transcriptase subunit beta'</fullName>
    </alternativeName>
</protein>
<gene>
    <name evidence="1" type="primary">rpoC</name>
    <name type="ordered locus">SBO_4008</name>
</gene>